<keyword id="KW-0227">DNA damage</keyword>
<keyword id="KW-0233">DNA recombination</keyword>
<keyword id="KW-0234">DNA repair</keyword>
<proteinExistence type="inferred from homology"/>
<sequence>MDFTDQALVLRVGRFREADLWVRFLCRQRGIISAFAFGGCRSRRRFCGCLDIFNVVLMRVQGTRGGLYQSLQEATLLKGPDRLRRDWRRYGVAVNCLRFIEALGAGPDGADSAFTLTLEMLELLETVDVVPPLLPLLFRARFAFEQGYAPRFESCASCGEPFDGTAKDGGARFHVRDGVLYCGRCSAPTGATVAISRETLDALRFVQDNSPLRWSELCFSPTGRRECSRAVDGFIQYHIGLTWENGTFRRL</sequence>
<accession>A1VCW7</accession>
<protein>
    <recommendedName>
        <fullName evidence="1">DNA repair protein RecO</fullName>
    </recommendedName>
    <alternativeName>
        <fullName evidence="1">Recombination protein O</fullName>
    </alternativeName>
</protein>
<gene>
    <name evidence="1" type="primary">recO</name>
    <name type="ordered locus">Dvul_1264</name>
</gene>
<reference key="1">
    <citation type="journal article" date="2009" name="Environ. Microbiol.">
        <title>Contribution of mobile genetic elements to Desulfovibrio vulgaris genome plasticity.</title>
        <authorList>
            <person name="Walker C.B."/>
            <person name="Stolyar S."/>
            <person name="Chivian D."/>
            <person name="Pinel N."/>
            <person name="Gabster J.A."/>
            <person name="Dehal P.S."/>
            <person name="He Z."/>
            <person name="Yang Z.K."/>
            <person name="Yen H.C."/>
            <person name="Zhou J."/>
            <person name="Wall J.D."/>
            <person name="Hazen T.C."/>
            <person name="Arkin A.P."/>
            <person name="Stahl D.A."/>
        </authorList>
    </citation>
    <scope>NUCLEOTIDE SEQUENCE [LARGE SCALE GENOMIC DNA]</scope>
    <source>
        <strain>DP4</strain>
    </source>
</reference>
<name>RECO_NITV4</name>
<dbReference type="EMBL" id="CP000527">
    <property type="protein sequence ID" value="ABM28283.1"/>
    <property type="molecule type" value="Genomic_DNA"/>
</dbReference>
<dbReference type="RefSeq" id="WP_010939185.1">
    <property type="nucleotide sequence ID" value="NC_008751.1"/>
</dbReference>
<dbReference type="SMR" id="A1VCW7"/>
<dbReference type="KEGG" id="dvl:Dvul_1264"/>
<dbReference type="HOGENOM" id="CLU_066632_2_1_7"/>
<dbReference type="Proteomes" id="UP000009173">
    <property type="component" value="Chromosome"/>
</dbReference>
<dbReference type="GO" id="GO:0043590">
    <property type="term" value="C:bacterial nucleoid"/>
    <property type="evidence" value="ECO:0007669"/>
    <property type="project" value="TreeGrafter"/>
</dbReference>
<dbReference type="GO" id="GO:0006310">
    <property type="term" value="P:DNA recombination"/>
    <property type="evidence" value="ECO:0007669"/>
    <property type="project" value="UniProtKB-UniRule"/>
</dbReference>
<dbReference type="GO" id="GO:0006302">
    <property type="term" value="P:double-strand break repair"/>
    <property type="evidence" value="ECO:0007669"/>
    <property type="project" value="TreeGrafter"/>
</dbReference>
<dbReference type="Gene3D" id="2.40.50.140">
    <property type="entry name" value="Nucleic acid-binding proteins"/>
    <property type="match status" value="1"/>
</dbReference>
<dbReference type="Gene3D" id="1.20.1440.120">
    <property type="entry name" value="Recombination protein O, C-terminal domain"/>
    <property type="match status" value="1"/>
</dbReference>
<dbReference type="Gene3D" id="6.20.220.20">
    <property type="entry name" value="Recombination protein O, zinc-binding domain"/>
    <property type="match status" value="1"/>
</dbReference>
<dbReference type="HAMAP" id="MF_00201">
    <property type="entry name" value="RecO"/>
    <property type="match status" value="1"/>
</dbReference>
<dbReference type="InterPro" id="IPR037278">
    <property type="entry name" value="ARFGAP/RecO"/>
</dbReference>
<dbReference type="InterPro" id="IPR022572">
    <property type="entry name" value="DNA_rep/recomb_RecO_N"/>
</dbReference>
<dbReference type="InterPro" id="IPR012340">
    <property type="entry name" value="NA-bd_OB-fold"/>
</dbReference>
<dbReference type="InterPro" id="IPR003717">
    <property type="entry name" value="RecO"/>
</dbReference>
<dbReference type="InterPro" id="IPR042242">
    <property type="entry name" value="RecO_C"/>
</dbReference>
<dbReference type="NCBIfam" id="TIGR00613">
    <property type="entry name" value="reco"/>
    <property type="match status" value="1"/>
</dbReference>
<dbReference type="PANTHER" id="PTHR33991">
    <property type="entry name" value="DNA REPAIR PROTEIN RECO"/>
    <property type="match status" value="1"/>
</dbReference>
<dbReference type="PANTHER" id="PTHR33991:SF1">
    <property type="entry name" value="DNA REPAIR PROTEIN RECO"/>
    <property type="match status" value="1"/>
</dbReference>
<dbReference type="Pfam" id="PF02565">
    <property type="entry name" value="RecO_C"/>
    <property type="match status" value="1"/>
</dbReference>
<dbReference type="Pfam" id="PF11967">
    <property type="entry name" value="RecO_N"/>
    <property type="match status" value="1"/>
</dbReference>
<dbReference type="SUPFAM" id="SSF57863">
    <property type="entry name" value="ArfGap/RecO-like zinc finger"/>
    <property type="match status" value="1"/>
</dbReference>
<dbReference type="SUPFAM" id="SSF50249">
    <property type="entry name" value="Nucleic acid-binding proteins"/>
    <property type="match status" value="1"/>
</dbReference>
<organism>
    <name type="scientific">Nitratidesulfovibrio vulgaris (strain DP4)</name>
    <name type="common">Desulfovibrio vulgaris</name>
    <dbReference type="NCBI Taxonomy" id="391774"/>
    <lineage>
        <taxon>Bacteria</taxon>
        <taxon>Pseudomonadati</taxon>
        <taxon>Thermodesulfobacteriota</taxon>
        <taxon>Desulfovibrionia</taxon>
        <taxon>Desulfovibrionales</taxon>
        <taxon>Desulfovibrionaceae</taxon>
        <taxon>Nitratidesulfovibrio</taxon>
    </lineage>
</organism>
<comment type="function">
    <text evidence="1">Involved in DNA repair and RecF pathway recombination.</text>
</comment>
<comment type="similarity">
    <text evidence="1">Belongs to the RecO family.</text>
</comment>
<feature type="chain" id="PRO_1000193373" description="DNA repair protein RecO">
    <location>
        <begin position="1"/>
        <end position="251"/>
    </location>
</feature>
<evidence type="ECO:0000255" key="1">
    <source>
        <dbReference type="HAMAP-Rule" id="MF_00201"/>
    </source>
</evidence>